<proteinExistence type="inferred from homology"/>
<accession>A7ILW8</accession>
<evidence type="ECO:0000255" key="1">
    <source>
        <dbReference type="HAMAP-Rule" id="MF_00457"/>
    </source>
</evidence>
<dbReference type="EMBL" id="CP000781">
    <property type="protein sequence ID" value="ABS69011.1"/>
    <property type="molecule type" value="Genomic_DNA"/>
</dbReference>
<dbReference type="SMR" id="A7ILW8"/>
<dbReference type="STRING" id="78245.Xaut_3786"/>
<dbReference type="KEGG" id="xau:Xaut_3786"/>
<dbReference type="eggNOG" id="COG2220">
    <property type="taxonomic scope" value="Bacteria"/>
</dbReference>
<dbReference type="HOGENOM" id="CLU_070010_4_0_5"/>
<dbReference type="OrthoDB" id="9805728at2"/>
<dbReference type="PhylomeDB" id="A7ILW8"/>
<dbReference type="Proteomes" id="UP000002417">
    <property type="component" value="Chromosome"/>
</dbReference>
<dbReference type="GO" id="GO:0016787">
    <property type="term" value="F:hydrolase activity"/>
    <property type="evidence" value="ECO:0007669"/>
    <property type="project" value="UniProtKB-UniRule"/>
</dbReference>
<dbReference type="CDD" id="cd06262">
    <property type="entry name" value="metallo-hydrolase-like_MBL-fold"/>
    <property type="match status" value="1"/>
</dbReference>
<dbReference type="Gene3D" id="3.60.15.10">
    <property type="entry name" value="Ribonuclease Z/Hydroxyacylglutathione hydrolase-like"/>
    <property type="match status" value="1"/>
</dbReference>
<dbReference type="HAMAP" id="MF_00457">
    <property type="entry name" value="UPF0173"/>
    <property type="match status" value="1"/>
</dbReference>
<dbReference type="InterPro" id="IPR001279">
    <property type="entry name" value="Metallo-B-lactamas"/>
</dbReference>
<dbReference type="InterPro" id="IPR036866">
    <property type="entry name" value="RibonucZ/Hydroxyglut_hydro"/>
</dbReference>
<dbReference type="InterPro" id="IPR022877">
    <property type="entry name" value="UPF0173"/>
</dbReference>
<dbReference type="InterPro" id="IPR050114">
    <property type="entry name" value="UPF0173_UPF0282_UlaG_hydrolase"/>
</dbReference>
<dbReference type="NCBIfam" id="NF001911">
    <property type="entry name" value="PRK00685.1"/>
    <property type="match status" value="1"/>
</dbReference>
<dbReference type="PANTHER" id="PTHR43546:SF3">
    <property type="entry name" value="UPF0173 METAL-DEPENDENT HYDROLASE MJ1163"/>
    <property type="match status" value="1"/>
</dbReference>
<dbReference type="PANTHER" id="PTHR43546">
    <property type="entry name" value="UPF0173 METAL-DEPENDENT HYDROLASE MJ1163-RELATED"/>
    <property type="match status" value="1"/>
</dbReference>
<dbReference type="Pfam" id="PF12706">
    <property type="entry name" value="Lactamase_B_2"/>
    <property type="match status" value="1"/>
</dbReference>
<dbReference type="SMART" id="SM00849">
    <property type="entry name" value="Lactamase_B"/>
    <property type="match status" value="1"/>
</dbReference>
<dbReference type="SUPFAM" id="SSF56281">
    <property type="entry name" value="Metallo-hydrolase/oxidoreductase"/>
    <property type="match status" value="1"/>
</dbReference>
<protein>
    <recommendedName>
        <fullName evidence="1">UPF0173 metal-dependent hydrolase Xaut_3786</fullName>
    </recommendedName>
</protein>
<sequence>MKITWFGHAAFRLDFADKAVLIDPFFTGNPSFNSTVEEAARGVTHILLTHGHSDHVGDTVSLVEDAADASRTLPVVANPEICAYLAAKGAGNAGQMMNTGGSLDCGGFTVTMVRADHSSGGPGSPSEYLGNPTGLIIRAPGEPTVWHMGDTDIYSDMALMCEIHRPKVVFIPIGDRFTMGPAVAALAVKRFLPGVEVVVPCHYGSFPILVQDASFFAQALADHPVKVVVPGPGGSFDANITPA</sequence>
<keyword id="KW-0378">Hydrolase</keyword>
<keyword id="KW-1185">Reference proteome</keyword>
<organism>
    <name type="scientific">Xanthobacter autotrophicus (strain ATCC BAA-1158 / Py2)</name>
    <dbReference type="NCBI Taxonomy" id="78245"/>
    <lineage>
        <taxon>Bacteria</taxon>
        <taxon>Pseudomonadati</taxon>
        <taxon>Pseudomonadota</taxon>
        <taxon>Alphaproteobacteria</taxon>
        <taxon>Hyphomicrobiales</taxon>
        <taxon>Xanthobacteraceae</taxon>
        <taxon>Xanthobacter</taxon>
    </lineage>
</organism>
<name>Y3786_XANP2</name>
<gene>
    <name type="ordered locus">Xaut_3786</name>
</gene>
<comment type="similarity">
    <text evidence="1">Belongs to the UPF0173 family.</text>
</comment>
<reference key="1">
    <citation type="submission" date="2007-07" db="EMBL/GenBank/DDBJ databases">
        <title>Complete sequence of chromosome of Xanthobacter autotrophicus Py2.</title>
        <authorList>
            <consortium name="US DOE Joint Genome Institute"/>
            <person name="Copeland A."/>
            <person name="Lucas S."/>
            <person name="Lapidus A."/>
            <person name="Barry K."/>
            <person name="Glavina del Rio T."/>
            <person name="Hammon N."/>
            <person name="Israni S."/>
            <person name="Dalin E."/>
            <person name="Tice H."/>
            <person name="Pitluck S."/>
            <person name="Sims D."/>
            <person name="Brettin T."/>
            <person name="Bruce D."/>
            <person name="Detter J.C."/>
            <person name="Han C."/>
            <person name="Tapia R."/>
            <person name="Brainard J."/>
            <person name="Schmutz J."/>
            <person name="Larimer F."/>
            <person name="Land M."/>
            <person name="Hauser L."/>
            <person name="Kyrpides N."/>
            <person name="Kim E."/>
            <person name="Ensigns S.A."/>
            <person name="Richardson P."/>
        </authorList>
    </citation>
    <scope>NUCLEOTIDE SEQUENCE [LARGE SCALE GENOMIC DNA]</scope>
    <source>
        <strain>ATCC BAA-1158 / Py2</strain>
    </source>
</reference>
<feature type="chain" id="PRO_0000367223" description="UPF0173 metal-dependent hydrolase Xaut_3786">
    <location>
        <begin position="1"/>
        <end position="243"/>
    </location>
</feature>